<protein>
    <recommendedName>
        <fullName evidence="1">Large ribosomal subunit protein bL34</fullName>
    </recommendedName>
    <alternativeName>
        <fullName evidence="3">50S ribosomal protein L34</fullName>
    </alternativeName>
</protein>
<evidence type="ECO:0000255" key="1">
    <source>
        <dbReference type="HAMAP-Rule" id="MF_00391"/>
    </source>
</evidence>
<evidence type="ECO:0000256" key="2">
    <source>
        <dbReference type="SAM" id="MobiDB-lite"/>
    </source>
</evidence>
<evidence type="ECO:0000305" key="3"/>
<feature type="chain" id="PRO_1000060751" description="Large ribosomal subunit protein bL34">
    <location>
        <begin position="1"/>
        <end position="44"/>
    </location>
</feature>
<feature type="region of interest" description="Disordered" evidence="2">
    <location>
        <begin position="1"/>
        <end position="44"/>
    </location>
</feature>
<feature type="compositionally biased region" description="Basic residues" evidence="2">
    <location>
        <begin position="1"/>
        <end position="22"/>
    </location>
</feature>
<feature type="compositionally biased region" description="Basic residues" evidence="2">
    <location>
        <begin position="31"/>
        <end position="44"/>
    </location>
</feature>
<reference key="1">
    <citation type="submission" date="2007-10" db="EMBL/GenBank/DDBJ databases">
        <title>Complete genome of Alkaliphilus oremlandii OhILAs.</title>
        <authorList>
            <person name="Copeland A."/>
            <person name="Lucas S."/>
            <person name="Lapidus A."/>
            <person name="Barry K."/>
            <person name="Detter J.C."/>
            <person name="Glavina del Rio T."/>
            <person name="Hammon N."/>
            <person name="Israni S."/>
            <person name="Dalin E."/>
            <person name="Tice H."/>
            <person name="Pitluck S."/>
            <person name="Chain P."/>
            <person name="Malfatti S."/>
            <person name="Shin M."/>
            <person name="Vergez L."/>
            <person name="Schmutz J."/>
            <person name="Larimer F."/>
            <person name="Land M."/>
            <person name="Hauser L."/>
            <person name="Kyrpides N."/>
            <person name="Mikhailova N."/>
            <person name="Stolz J.F."/>
            <person name="Dawson A."/>
            <person name="Fisher E."/>
            <person name="Crable B."/>
            <person name="Perera E."/>
            <person name="Lisak J."/>
            <person name="Ranganathan M."/>
            <person name="Basu P."/>
            <person name="Richardson P."/>
        </authorList>
    </citation>
    <scope>NUCLEOTIDE SEQUENCE [LARGE SCALE GENOMIC DNA]</scope>
    <source>
        <strain>OhILAs</strain>
    </source>
</reference>
<sequence length="44" mass="5343">MKRTYQPKKRQRSKEHGFRKRMSTSTGRNILKARRLKGRKRLTA</sequence>
<comment type="similarity">
    <text evidence="1">Belongs to the bacterial ribosomal protein bL34 family.</text>
</comment>
<accession>A8MKS4</accession>
<keyword id="KW-1185">Reference proteome</keyword>
<keyword id="KW-0687">Ribonucleoprotein</keyword>
<keyword id="KW-0689">Ribosomal protein</keyword>
<organism>
    <name type="scientific">Alkaliphilus oremlandii (strain OhILAs)</name>
    <name type="common">Clostridium oremlandii (strain OhILAs)</name>
    <dbReference type="NCBI Taxonomy" id="350688"/>
    <lineage>
        <taxon>Bacteria</taxon>
        <taxon>Bacillati</taxon>
        <taxon>Bacillota</taxon>
        <taxon>Clostridia</taxon>
        <taxon>Peptostreptococcales</taxon>
        <taxon>Natronincolaceae</taxon>
        <taxon>Alkaliphilus</taxon>
    </lineage>
</organism>
<name>RL34_ALKOO</name>
<proteinExistence type="inferred from homology"/>
<gene>
    <name evidence="1" type="primary">rpmH</name>
    <name type="ordered locus">Clos_2877</name>
</gene>
<dbReference type="EMBL" id="CP000853">
    <property type="protein sequence ID" value="ABW20406.1"/>
    <property type="molecule type" value="Genomic_DNA"/>
</dbReference>
<dbReference type="RefSeq" id="WP_012160713.1">
    <property type="nucleotide sequence ID" value="NC_009922.1"/>
</dbReference>
<dbReference type="SMR" id="A8MKS4"/>
<dbReference type="STRING" id="350688.Clos_2877"/>
<dbReference type="KEGG" id="aoe:Clos_2877"/>
<dbReference type="eggNOG" id="COG0230">
    <property type="taxonomic scope" value="Bacteria"/>
</dbReference>
<dbReference type="HOGENOM" id="CLU_129938_2_1_9"/>
<dbReference type="OrthoDB" id="1934179at2"/>
<dbReference type="Proteomes" id="UP000000269">
    <property type="component" value="Chromosome"/>
</dbReference>
<dbReference type="GO" id="GO:1990904">
    <property type="term" value="C:ribonucleoprotein complex"/>
    <property type="evidence" value="ECO:0007669"/>
    <property type="project" value="UniProtKB-KW"/>
</dbReference>
<dbReference type="GO" id="GO:0005840">
    <property type="term" value="C:ribosome"/>
    <property type="evidence" value="ECO:0007669"/>
    <property type="project" value="UniProtKB-KW"/>
</dbReference>
<dbReference type="GO" id="GO:0003735">
    <property type="term" value="F:structural constituent of ribosome"/>
    <property type="evidence" value="ECO:0007669"/>
    <property type="project" value="InterPro"/>
</dbReference>
<dbReference type="GO" id="GO:0006412">
    <property type="term" value="P:translation"/>
    <property type="evidence" value="ECO:0007669"/>
    <property type="project" value="UniProtKB-UniRule"/>
</dbReference>
<dbReference type="FunFam" id="1.10.287.3980:FF:000001">
    <property type="entry name" value="Mitochondrial ribosomal protein L34"/>
    <property type="match status" value="1"/>
</dbReference>
<dbReference type="Gene3D" id="1.10.287.3980">
    <property type="match status" value="1"/>
</dbReference>
<dbReference type="HAMAP" id="MF_00391">
    <property type="entry name" value="Ribosomal_bL34"/>
    <property type="match status" value="1"/>
</dbReference>
<dbReference type="InterPro" id="IPR000271">
    <property type="entry name" value="Ribosomal_bL34"/>
</dbReference>
<dbReference type="InterPro" id="IPR020939">
    <property type="entry name" value="Ribosomal_bL34_CS"/>
</dbReference>
<dbReference type="NCBIfam" id="TIGR01030">
    <property type="entry name" value="rpmH_bact"/>
    <property type="match status" value="1"/>
</dbReference>
<dbReference type="PANTHER" id="PTHR14503:SF4">
    <property type="entry name" value="LARGE RIBOSOMAL SUBUNIT PROTEIN BL34M"/>
    <property type="match status" value="1"/>
</dbReference>
<dbReference type="PANTHER" id="PTHR14503">
    <property type="entry name" value="MITOCHONDRIAL RIBOSOMAL PROTEIN 34 FAMILY MEMBER"/>
    <property type="match status" value="1"/>
</dbReference>
<dbReference type="Pfam" id="PF00468">
    <property type="entry name" value="Ribosomal_L34"/>
    <property type="match status" value="1"/>
</dbReference>
<dbReference type="PROSITE" id="PS00784">
    <property type="entry name" value="RIBOSOMAL_L34"/>
    <property type="match status" value="1"/>
</dbReference>